<evidence type="ECO:0000250" key="1">
    <source>
        <dbReference type="UniProtKB" id="P37299"/>
    </source>
</evidence>
<evidence type="ECO:0000255" key="2"/>
<evidence type="ECO:0000269" key="3">
    <source>
    </source>
</evidence>
<evidence type="ECO:0000305" key="4"/>
<dbReference type="EMBL" id="X82325">
    <property type="protein sequence ID" value="CAA57768.1"/>
    <property type="molecule type" value="mRNA"/>
</dbReference>
<dbReference type="PIR" id="S68969">
    <property type="entry name" value="S68969"/>
</dbReference>
<dbReference type="SMR" id="P48505"/>
<dbReference type="FunCoup" id="P48505">
    <property type="interactions" value="370"/>
</dbReference>
<dbReference type="STRING" id="4113.P48505"/>
<dbReference type="PaxDb" id="4113-PGSC0003DMT400053106"/>
<dbReference type="eggNOG" id="ENOG502S99R">
    <property type="taxonomic scope" value="Eukaryota"/>
</dbReference>
<dbReference type="InParanoid" id="P48505"/>
<dbReference type="Proteomes" id="UP000011115">
    <property type="component" value="Unassembled WGS sequence"/>
</dbReference>
<dbReference type="ExpressionAtlas" id="P48505">
    <property type="expression patterns" value="baseline and differential"/>
</dbReference>
<dbReference type="GO" id="GO:0005743">
    <property type="term" value="C:mitochondrial inner membrane"/>
    <property type="evidence" value="ECO:0007669"/>
    <property type="project" value="UniProtKB-SubCell"/>
</dbReference>
<sequence length="62" mass="6874">MTSPAAAGNGLFKFLRPKLRPQSTDIQAAAGWGVAAVTGALWVIQPWDFLRKTFIEKQEEEK</sequence>
<proteinExistence type="evidence at protein level"/>
<protein>
    <recommendedName>
        <fullName>Ubiquinol-cytochrome c reductase complex 6.7 kDa protein</fullName>
        <shortName>CR6</shortName>
    </recommendedName>
</protein>
<name>UCR11_SOLTU</name>
<feature type="initiator methionine" description="Removed" evidence="3">
    <location>
        <position position="1"/>
    </location>
</feature>
<feature type="chain" id="PRO_0000193562" description="Ubiquinol-cytochrome c reductase complex 6.7 kDa protein">
    <location>
        <begin position="2"/>
        <end position="62"/>
    </location>
</feature>
<feature type="topological domain" description="Mitochondrial matrix" evidence="1">
    <location>
        <begin position="2"/>
        <end position="25"/>
    </location>
</feature>
<feature type="transmembrane region" description="Helical" evidence="2">
    <location>
        <begin position="26"/>
        <end position="44"/>
    </location>
</feature>
<feature type="topological domain" description="Mitochondrial intermembrane" evidence="1">
    <location>
        <begin position="45"/>
        <end position="62"/>
    </location>
</feature>
<accession>P48505</accession>
<comment type="function">
    <text evidence="1">Component of the ubiquinol-cytochrome c oxidoreductase, a multisubunit transmembrane complex that is part of the mitochondrial electron transport chain which drives oxidative phosphorylation. The respiratory chain contains 3 multisubunit complexes succinate dehydrogenase (complex II, CII), ubiquinol-cytochrome c oxidoreductase (cytochrome b-c1 complex, complex III, CIII) and cytochrome c oxidase (complex IV, CIV), that cooperate to transfer electrons derived from NADH and succinate to molecular oxygen, creating an electrochemical gradient over the inner membrane that drives transmembrane transport and the ATP synthase. The cytochrome b-c1 complex catalyzes electron transfer from ubiquinol to cytochrome c, linking this redox reaction to translocation of protons across the mitochondrial inner membrane, with protons being carried across the membrane as hydrogens on the quinol. In the process called Q cycle, 2 protons are consumed from the matrix, 4 protons are released into the intermembrane space and 2 electrons are passed to cytochrome c. QCR10 has a role in CIII assembly and RIP1 stability.</text>
</comment>
<comment type="subunit">
    <text evidence="1">Component of the ubiquinol-cytochrome c oxidoreductase (cytochrome b-c1 complex, complex III, CIII), a multisubunit enzyme composed of 3 respiratory subunits cytochrome b, cytochrome c1 and Rieske protein, 2 core protein subunits, and additional low-molecular weight protein subunits. The complex exists as an obligatory dimer and forms supercomplexes (SCs) in the inner mitochondrial membrane with cytochrome c oxidase (complex IV, CIV).</text>
</comment>
<comment type="subcellular location">
    <subcellularLocation>
        <location evidence="1">Mitochondrion inner membrane</location>
        <topology evidence="1">Single-pass membrane protein</topology>
    </subcellularLocation>
</comment>
<comment type="similarity">
    <text evidence="4">Belongs to the UQCR11/QCR10 family.</text>
</comment>
<reference key="1">
    <citation type="journal article" date="1995" name="Eur. J. Biochem.">
        <title>Cytochrome c reductase from potato does not comprise three core proteins but contains an additional low-molecular-mass subunit.</title>
        <authorList>
            <person name="Jaensch L."/>
            <person name="Kruft V."/>
            <person name="Schmitz U.K."/>
            <person name="Braun H.-P."/>
        </authorList>
    </citation>
    <scope>NUCLEOTIDE SEQUENCE [MRNA]</scope>
    <scope>PROTEIN SEQUENCE OF 2-50</scope>
    <source>
        <tissue>Tuber</tissue>
    </source>
</reference>
<keyword id="KW-0903">Direct protein sequencing</keyword>
<keyword id="KW-0249">Electron transport</keyword>
<keyword id="KW-0472">Membrane</keyword>
<keyword id="KW-0496">Mitochondrion</keyword>
<keyword id="KW-0999">Mitochondrion inner membrane</keyword>
<keyword id="KW-1185">Reference proteome</keyword>
<keyword id="KW-0679">Respiratory chain</keyword>
<keyword id="KW-0812">Transmembrane</keyword>
<keyword id="KW-1133">Transmembrane helix</keyword>
<keyword id="KW-0813">Transport</keyword>
<organism>
    <name type="scientific">Solanum tuberosum</name>
    <name type="common">Potato</name>
    <dbReference type="NCBI Taxonomy" id="4113"/>
    <lineage>
        <taxon>Eukaryota</taxon>
        <taxon>Viridiplantae</taxon>
        <taxon>Streptophyta</taxon>
        <taxon>Embryophyta</taxon>
        <taxon>Tracheophyta</taxon>
        <taxon>Spermatophyta</taxon>
        <taxon>Magnoliopsida</taxon>
        <taxon>eudicotyledons</taxon>
        <taxon>Gunneridae</taxon>
        <taxon>Pentapetalae</taxon>
        <taxon>asterids</taxon>
        <taxon>lamiids</taxon>
        <taxon>Solanales</taxon>
        <taxon>Solanaceae</taxon>
        <taxon>Solanoideae</taxon>
        <taxon>Solaneae</taxon>
        <taxon>Solanum</taxon>
    </lineage>
</organism>